<reference key="1">
    <citation type="journal article" date="2007" name="DNA Res.">
        <title>Complete genomic structure of the bloom-forming toxic cyanobacterium Microcystis aeruginosa NIES-843.</title>
        <authorList>
            <person name="Kaneko T."/>
            <person name="Nakajima N."/>
            <person name="Okamoto S."/>
            <person name="Suzuki I."/>
            <person name="Tanabe Y."/>
            <person name="Tamaoki M."/>
            <person name="Nakamura Y."/>
            <person name="Kasai F."/>
            <person name="Watanabe A."/>
            <person name="Kawashima K."/>
            <person name="Kishida Y."/>
            <person name="Ono A."/>
            <person name="Shimizu Y."/>
            <person name="Takahashi C."/>
            <person name="Minami C."/>
            <person name="Fujishiro T."/>
            <person name="Kohara M."/>
            <person name="Katoh M."/>
            <person name="Nakazaki N."/>
            <person name="Nakayama S."/>
            <person name="Yamada M."/>
            <person name="Tabata S."/>
            <person name="Watanabe M.M."/>
        </authorList>
    </citation>
    <scope>NUCLEOTIDE SEQUENCE [LARGE SCALE GENOMIC DNA]</scope>
    <source>
        <strain>NIES-843 / IAM M-247</strain>
    </source>
</reference>
<proteinExistence type="inferred from homology"/>
<dbReference type="EMBL" id="AP009552">
    <property type="protein sequence ID" value="BAG01006.1"/>
    <property type="molecule type" value="Genomic_DNA"/>
</dbReference>
<dbReference type="SMR" id="B0JSW2"/>
<dbReference type="STRING" id="449447.MAE_11840"/>
<dbReference type="PaxDb" id="449447-MAE_11840"/>
<dbReference type="EnsemblBacteria" id="BAG01006">
    <property type="protein sequence ID" value="BAG01006"/>
    <property type="gene ID" value="MAE_11840"/>
</dbReference>
<dbReference type="KEGG" id="mar:MAE_11840"/>
<dbReference type="eggNOG" id="COG2052">
    <property type="taxonomic scope" value="Bacteria"/>
</dbReference>
<dbReference type="HOGENOM" id="CLU_165326_0_0_3"/>
<dbReference type="BioCyc" id="MAER449447:MAE_RS05225-MONOMER"/>
<dbReference type="Proteomes" id="UP000001510">
    <property type="component" value="Chromosome"/>
</dbReference>
<dbReference type="HAMAP" id="MF_01503">
    <property type="entry name" value="RemA"/>
    <property type="match status" value="1"/>
</dbReference>
<dbReference type="InterPro" id="IPR007169">
    <property type="entry name" value="RemA-like"/>
</dbReference>
<dbReference type="NCBIfam" id="NF046064">
    <property type="entry name" value="MtxBflmRegRemA"/>
    <property type="match status" value="1"/>
</dbReference>
<dbReference type="NCBIfam" id="NF003315">
    <property type="entry name" value="PRK04323.1"/>
    <property type="match status" value="1"/>
</dbReference>
<dbReference type="PANTHER" id="PTHR38449:SF1">
    <property type="entry name" value="REGULATORY PROTEIN SSL2874-RELATED"/>
    <property type="match status" value="1"/>
</dbReference>
<dbReference type="PANTHER" id="PTHR38449">
    <property type="entry name" value="REGULATORY PROTEIN TM_1690-RELATED"/>
    <property type="match status" value="1"/>
</dbReference>
<dbReference type="Pfam" id="PF04025">
    <property type="entry name" value="RemA-like"/>
    <property type="match status" value="1"/>
</dbReference>
<organism>
    <name type="scientific">Microcystis aeruginosa (strain NIES-843 / IAM M-2473)</name>
    <dbReference type="NCBI Taxonomy" id="449447"/>
    <lineage>
        <taxon>Bacteria</taxon>
        <taxon>Bacillati</taxon>
        <taxon>Cyanobacteriota</taxon>
        <taxon>Cyanophyceae</taxon>
        <taxon>Oscillatoriophycideae</taxon>
        <taxon>Chroococcales</taxon>
        <taxon>Microcystaceae</taxon>
        <taxon>Microcystis</taxon>
    </lineage>
</organism>
<name>Y1184_MICAN</name>
<accession>B0JSW2</accession>
<gene>
    <name type="ordered locus">MAE_11840</name>
</gene>
<protein>
    <recommendedName>
        <fullName evidence="1">Putative regulatory protein MAE_11840</fullName>
    </recommendedName>
</protein>
<sequence>MDIQLINIGFGNIVSANRVIAIVSPESAPIKRIISDARDKGCLIDATYGRRTRAVIITDSSHVVLSAIQPETVAHRFVVNKEAPVNSSN</sequence>
<feature type="chain" id="PRO_1000198224" description="Putative regulatory protein MAE_11840">
    <location>
        <begin position="1"/>
        <end position="89"/>
    </location>
</feature>
<comment type="similarity">
    <text evidence="1">Belongs to the RemA family.</text>
</comment>
<evidence type="ECO:0000255" key="1">
    <source>
        <dbReference type="HAMAP-Rule" id="MF_01503"/>
    </source>
</evidence>